<evidence type="ECO:0000255" key="1">
    <source>
        <dbReference type="HAMAP-Rule" id="MF_01559"/>
    </source>
</evidence>
<gene>
    <name evidence="1" type="primary">lldD</name>
    <name type="ordered locus">XOO0022</name>
</gene>
<dbReference type="EC" id="1.1.-.-" evidence="1"/>
<dbReference type="EMBL" id="AE013598">
    <property type="protein sequence ID" value="AAW73276.1"/>
    <property type="molecule type" value="Genomic_DNA"/>
</dbReference>
<dbReference type="SMR" id="Q5H6Z4"/>
<dbReference type="STRING" id="291331.XOO0022"/>
<dbReference type="KEGG" id="xoo:XOO0022"/>
<dbReference type="HOGENOM" id="CLU_020639_0_0_6"/>
<dbReference type="Proteomes" id="UP000006735">
    <property type="component" value="Chromosome"/>
</dbReference>
<dbReference type="GO" id="GO:0005886">
    <property type="term" value="C:plasma membrane"/>
    <property type="evidence" value="ECO:0007669"/>
    <property type="project" value="UniProtKB-SubCell"/>
</dbReference>
<dbReference type="GO" id="GO:0010181">
    <property type="term" value="F:FMN binding"/>
    <property type="evidence" value="ECO:0007669"/>
    <property type="project" value="InterPro"/>
</dbReference>
<dbReference type="GO" id="GO:0004459">
    <property type="term" value="F:L-lactate dehydrogenase activity"/>
    <property type="evidence" value="ECO:0007669"/>
    <property type="project" value="UniProtKB-UniRule"/>
</dbReference>
<dbReference type="GO" id="GO:0009060">
    <property type="term" value="P:aerobic respiration"/>
    <property type="evidence" value="ECO:0007669"/>
    <property type="project" value="TreeGrafter"/>
</dbReference>
<dbReference type="GO" id="GO:0006089">
    <property type="term" value="P:lactate metabolic process"/>
    <property type="evidence" value="ECO:0007669"/>
    <property type="project" value="UniProtKB-UniRule"/>
</dbReference>
<dbReference type="CDD" id="cd02809">
    <property type="entry name" value="alpha_hydroxyacid_oxid_FMN"/>
    <property type="match status" value="1"/>
</dbReference>
<dbReference type="FunFam" id="3.20.20.70:FF:000029">
    <property type="entry name" value="L-lactate dehydrogenase"/>
    <property type="match status" value="1"/>
</dbReference>
<dbReference type="Gene3D" id="3.20.20.70">
    <property type="entry name" value="Aldolase class I"/>
    <property type="match status" value="1"/>
</dbReference>
<dbReference type="HAMAP" id="MF_01559">
    <property type="entry name" value="L_lact_dehydr"/>
    <property type="match status" value="1"/>
</dbReference>
<dbReference type="InterPro" id="IPR013785">
    <property type="entry name" value="Aldolase_TIM"/>
</dbReference>
<dbReference type="InterPro" id="IPR012133">
    <property type="entry name" value="Alpha-hydoxy_acid_DH_FMN"/>
</dbReference>
<dbReference type="InterPro" id="IPR000262">
    <property type="entry name" value="FMN-dep_DH"/>
</dbReference>
<dbReference type="InterPro" id="IPR037396">
    <property type="entry name" value="FMN_HAD"/>
</dbReference>
<dbReference type="InterPro" id="IPR008259">
    <property type="entry name" value="FMN_hydac_DH_AS"/>
</dbReference>
<dbReference type="InterPro" id="IPR020920">
    <property type="entry name" value="LldD"/>
</dbReference>
<dbReference type="NCBIfam" id="NF033901">
    <property type="entry name" value="L_lactate_LldD"/>
    <property type="match status" value="1"/>
</dbReference>
<dbReference type="NCBIfam" id="NF008398">
    <property type="entry name" value="PRK11197.1"/>
    <property type="match status" value="1"/>
</dbReference>
<dbReference type="PANTHER" id="PTHR10578:SF85">
    <property type="entry name" value="L-LACTATE DEHYDROGENASE"/>
    <property type="match status" value="1"/>
</dbReference>
<dbReference type="PANTHER" id="PTHR10578">
    <property type="entry name" value="S -2-HYDROXY-ACID OXIDASE-RELATED"/>
    <property type="match status" value="1"/>
</dbReference>
<dbReference type="Pfam" id="PF01070">
    <property type="entry name" value="FMN_dh"/>
    <property type="match status" value="1"/>
</dbReference>
<dbReference type="PIRSF" id="PIRSF000138">
    <property type="entry name" value="Al-hdrx_acd_dh"/>
    <property type="match status" value="1"/>
</dbReference>
<dbReference type="SUPFAM" id="SSF51395">
    <property type="entry name" value="FMN-linked oxidoreductases"/>
    <property type="match status" value="1"/>
</dbReference>
<dbReference type="PROSITE" id="PS00557">
    <property type="entry name" value="FMN_HYDROXY_ACID_DH_1"/>
    <property type="match status" value="1"/>
</dbReference>
<dbReference type="PROSITE" id="PS51349">
    <property type="entry name" value="FMN_HYDROXY_ACID_DH_2"/>
    <property type="match status" value="1"/>
</dbReference>
<accession>Q5H6Z4</accession>
<reference key="1">
    <citation type="journal article" date="2005" name="Nucleic Acids Res.">
        <title>The genome sequence of Xanthomonas oryzae pathovar oryzae KACC10331, the bacterial blight pathogen of rice.</title>
        <authorList>
            <person name="Lee B.-M."/>
            <person name="Park Y.-J."/>
            <person name="Park D.-S."/>
            <person name="Kang H.-W."/>
            <person name="Kim J.-G."/>
            <person name="Song E.-S."/>
            <person name="Park I.-C."/>
            <person name="Yoon U.-H."/>
            <person name="Hahn J.-H."/>
            <person name="Koo B.-S."/>
            <person name="Lee G.-B."/>
            <person name="Kim H."/>
            <person name="Park H.-S."/>
            <person name="Yoon K.-O."/>
            <person name="Kim J.-H."/>
            <person name="Jung C.-H."/>
            <person name="Koh N.-H."/>
            <person name="Seo J.-S."/>
            <person name="Go S.-J."/>
        </authorList>
    </citation>
    <scope>NUCLEOTIDE SEQUENCE [LARGE SCALE GENOMIC DNA]</scope>
    <source>
        <strain>KACC10331 / KXO85</strain>
    </source>
</reference>
<protein>
    <recommendedName>
        <fullName evidence="1">L-lactate dehydrogenase</fullName>
        <ecNumber evidence="1">1.1.-.-</ecNumber>
    </recommendedName>
</protein>
<name>LLDD_XANOR</name>
<feature type="chain" id="PRO_0000206358" description="L-lactate dehydrogenase">
    <location>
        <begin position="1"/>
        <end position="388"/>
    </location>
</feature>
<feature type="domain" description="FMN hydroxy acid dehydrogenase" evidence="1">
    <location>
        <begin position="1"/>
        <end position="380"/>
    </location>
</feature>
<feature type="active site" description="Proton acceptor" evidence="1">
    <location>
        <position position="275"/>
    </location>
</feature>
<feature type="binding site" evidence="1">
    <location>
        <position position="24"/>
    </location>
    <ligand>
        <name>substrate</name>
    </ligand>
</feature>
<feature type="binding site" evidence="1">
    <location>
        <position position="106"/>
    </location>
    <ligand>
        <name>FMN</name>
        <dbReference type="ChEBI" id="CHEBI:58210"/>
    </ligand>
</feature>
<feature type="binding site" evidence="1">
    <location>
        <position position="127"/>
    </location>
    <ligand>
        <name>FMN</name>
        <dbReference type="ChEBI" id="CHEBI:58210"/>
    </ligand>
</feature>
<feature type="binding site" evidence="1">
    <location>
        <position position="129"/>
    </location>
    <ligand>
        <name>substrate</name>
    </ligand>
</feature>
<feature type="binding site" evidence="1">
    <location>
        <position position="155"/>
    </location>
    <ligand>
        <name>FMN</name>
        <dbReference type="ChEBI" id="CHEBI:58210"/>
    </ligand>
</feature>
<feature type="binding site" evidence="1">
    <location>
        <position position="164"/>
    </location>
    <ligand>
        <name>substrate</name>
    </ligand>
</feature>
<feature type="binding site" evidence="1">
    <location>
        <position position="251"/>
    </location>
    <ligand>
        <name>FMN</name>
        <dbReference type="ChEBI" id="CHEBI:58210"/>
    </ligand>
</feature>
<feature type="binding site" evidence="1">
    <location>
        <position position="278"/>
    </location>
    <ligand>
        <name>substrate</name>
    </ligand>
</feature>
<feature type="binding site" evidence="1">
    <location>
        <begin position="306"/>
        <end position="330"/>
    </location>
    <ligand>
        <name>FMN</name>
        <dbReference type="ChEBI" id="CHEBI:58210"/>
    </ligand>
</feature>
<proteinExistence type="inferred from homology"/>
<organism>
    <name type="scientific">Xanthomonas oryzae pv. oryzae (strain KACC10331 / KXO85)</name>
    <dbReference type="NCBI Taxonomy" id="291331"/>
    <lineage>
        <taxon>Bacteria</taxon>
        <taxon>Pseudomonadati</taxon>
        <taxon>Pseudomonadota</taxon>
        <taxon>Gammaproteobacteria</taxon>
        <taxon>Lysobacterales</taxon>
        <taxon>Lysobacteraceae</taxon>
        <taxon>Xanthomonas</taxon>
    </lineage>
</organism>
<sequence length="388" mass="41842">MIISAASDYRAAAQARLPPFLFHYIDGGAYAEHTLRRNVSDLADVALRQRVLRNMSDLRLSTELFGETLAMPVALGPVGLTGMYARRGEVQAARAAAARGIPFTLSTVSVCPIEEVAPAIERPMWFQLYVLKDRGFMRNALERAKAAGVTTLVFTVDMPTPGARYRDAHSGMSGPNASLRRMLQAVTHPRWAWDVGVLGKPHDLGNISAYRGNPTGLQDYIGWLGANFDPSIAWKDLEWIREFWTGPMVIKGILDPEDARDAVRFGADGIVVSNHGGRQLDGVLSSARALPAIADAVKGELKILADSGIRSGLDVVRMLALGADAVLLGRAFVYALAADGQAGVENLLTLIEKEMRVAMTLTGTHSIAQISADALSRVTREQANAVSP</sequence>
<keyword id="KW-0997">Cell inner membrane</keyword>
<keyword id="KW-1003">Cell membrane</keyword>
<keyword id="KW-0285">Flavoprotein</keyword>
<keyword id="KW-0288">FMN</keyword>
<keyword id="KW-0472">Membrane</keyword>
<keyword id="KW-0560">Oxidoreductase</keyword>
<keyword id="KW-1185">Reference proteome</keyword>
<comment type="function">
    <text evidence="1">Catalyzes the conversion of L-lactate to pyruvate. Is coupled to the respiratory chain.</text>
</comment>
<comment type="catalytic activity">
    <reaction evidence="1">
        <text>(S)-lactate + A = pyruvate + AH2</text>
        <dbReference type="Rhea" id="RHEA:45816"/>
        <dbReference type="ChEBI" id="CHEBI:13193"/>
        <dbReference type="ChEBI" id="CHEBI:15361"/>
        <dbReference type="ChEBI" id="CHEBI:16651"/>
        <dbReference type="ChEBI" id="CHEBI:17499"/>
    </reaction>
</comment>
<comment type="cofactor">
    <cofactor evidence="1">
        <name>FMN</name>
        <dbReference type="ChEBI" id="CHEBI:58210"/>
    </cofactor>
</comment>
<comment type="subcellular location">
    <subcellularLocation>
        <location evidence="1">Cell inner membrane</location>
        <topology evidence="1">Peripheral membrane protein</topology>
    </subcellularLocation>
</comment>
<comment type="similarity">
    <text evidence="1">Belongs to the FMN-dependent alpha-hydroxy acid dehydrogenase family.</text>
</comment>